<name>SYV_LEIXX</name>
<feature type="chain" id="PRO_0000224611" description="Valine--tRNA ligase">
    <location>
        <begin position="1"/>
        <end position="862"/>
    </location>
</feature>
<feature type="region of interest" description="Disordered" evidence="2">
    <location>
        <begin position="110"/>
        <end position="130"/>
    </location>
</feature>
<feature type="short sequence motif" description="'HIGH' region">
    <location>
        <begin position="47"/>
        <end position="57"/>
    </location>
</feature>
<feature type="short sequence motif" description="'KMSKS' region">
    <location>
        <begin position="584"/>
        <end position="588"/>
    </location>
</feature>
<feature type="compositionally biased region" description="Basic and acidic residues" evidence="2">
    <location>
        <begin position="120"/>
        <end position="129"/>
    </location>
</feature>
<feature type="binding site" evidence="1">
    <location>
        <position position="587"/>
    </location>
    <ligand>
        <name>ATP</name>
        <dbReference type="ChEBI" id="CHEBI:30616"/>
    </ligand>
</feature>
<evidence type="ECO:0000255" key="1">
    <source>
        <dbReference type="HAMAP-Rule" id="MF_02005"/>
    </source>
</evidence>
<evidence type="ECO:0000256" key="2">
    <source>
        <dbReference type="SAM" id="MobiDB-lite"/>
    </source>
</evidence>
<protein>
    <recommendedName>
        <fullName evidence="1">Valine--tRNA ligase</fullName>
        <ecNumber evidence="1">6.1.1.9</ecNumber>
    </recommendedName>
    <alternativeName>
        <fullName evidence="1">Valyl-tRNA synthetase</fullName>
        <shortName evidence="1">ValRS</shortName>
    </alternativeName>
</protein>
<sequence length="862" mass="95030">MPEKPALEGLEGKWGSRWQEDGTYLFDRAAAIAAGRDAVYSIDTPPPTASGSLHIGHVFSYTHTDVVARFQRMLGKRVFYPMGWDDNGLPTERRVQNYYGVRCDPTLPYEPGLTPPFEGGDNKSSKAADQKPISRRNFIELCERLTVEDEKQFEALWRSLGLSVDWSQTYRTIGEESLRTSQLAFLRNVKRGEAYQALAPTLWDITFRTAVAQAELEDRDQPSAYHRVAFHGEAGPVFIETTRPELLPACVALVAHPDDERYQPLLGTTVRTPVFGVEVPVVAHHLAQPDKGSGIAMICTFGDITDVTWWRELDLPNRAIIGFDGRIVSDAPEAIDTEAGREAYAQLAGKTVFSAKQTVVELLRASGDLVGEPKPIQHPVKFFEKGDKPLEIVSTRQWYVKNGARDEELRERLIELGRGIDWHPDFMRVRYENWVNGLTGDWLISRQRFFGVPIPVWYPLDAGGNPVFDAPILPLEESLPIDPSSAAAPGYTEQQRGQAGGFVGEHDVMDTWMTSSLTPQLAGGWHRDDELFAAVSPYDLRPQGQDIIRTWLFSTLLRSQLEDGVAPWTHAALSGFIVDPDRKKMSKSKGNVVTPADVLERHGSDAVRYWAASSRLGTDAAFDPQNPTQIKIGRRLAIKLLNAAKFILGFDAPASLDLAQVTVPLDRSMLQQLTDVITDATAALDAYDHARALETTETFFWTFCDDYLELVKERAYGEASTGQVSAVVALRMALSAFLRLFAPVLPFAAEEAWRWWNEGSVHLAAWPAAAETSVGGNDARAVLNVLGRALTGIRGAKTAAKASQRTPVDSAVIAGPAGDLAVIESAADDLRSVGRIVELRFTAGADLAVADIVLTQAPEEER</sequence>
<dbReference type="EC" id="6.1.1.9" evidence="1"/>
<dbReference type="EMBL" id="AE016822">
    <property type="protein sequence ID" value="AAT88703.1"/>
    <property type="molecule type" value="Genomic_DNA"/>
</dbReference>
<dbReference type="SMR" id="Q6AFZ2"/>
<dbReference type="STRING" id="281090.Lxx07930"/>
<dbReference type="KEGG" id="lxx:Lxx07930"/>
<dbReference type="eggNOG" id="COG0525">
    <property type="taxonomic scope" value="Bacteria"/>
</dbReference>
<dbReference type="HOGENOM" id="CLU_001493_0_2_11"/>
<dbReference type="Proteomes" id="UP000001306">
    <property type="component" value="Chromosome"/>
</dbReference>
<dbReference type="GO" id="GO:0005829">
    <property type="term" value="C:cytosol"/>
    <property type="evidence" value="ECO:0007669"/>
    <property type="project" value="TreeGrafter"/>
</dbReference>
<dbReference type="GO" id="GO:0002161">
    <property type="term" value="F:aminoacyl-tRNA deacylase activity"/>
    <property type="evidence" value="ECO:0007669"/>
    <property type="project" value="InterPro"/>
</dbReference>
<dbReference type="GO" id="GO:0005524">
    <property type="term" value="F:ATP binding"/>
    <property type="evidence" value="ECO:0007669"/>
    <property type="project" value="UniProtKB-UniRule"/>
</dbReference>
<dbReference type="GO" id="GO:0004832">
    <property type="term" value="F:valine-tRNA ligase activity"/>
    <property type="evidence" value="ECO:0007669"/>
    <property type="project" value="UniProtKB-UniRule"/>
</dbReference>
<dbReference type="GO" id="GO:0006438">
    <property type="term" value="P:valyl-tRNA aminoacylation"/>
    <property type="evidence" value="ECO:0007669"/>
    <property type="project" value="UniProtKB-UniRule"/>
</dbReference>
<dbReference type="CDD" id="cd07962">
    <property type="entry name" value="Anticodon_Ia_Val"/>
    <property type="match status" value="1"/>
</dbReference>
<dbReference type="Gene3D" id="3.40.50.620">
    <property type="entry name" value="HUPs"/>
    <property type="match status" value="2"/>
</dbReference>
<dbReference type="Gene3D" id="1.10.730.10">
    <property type="entry name" value="Isoleucyl-tRNA Synthetase, Domain 1"/>
    <property type="match status" value="1"/>
</dbReference>
<dbReference type="HAMAP" id="MF_02005">
    <property type="entry name" value="Val_tRNA_synth_type2"/>
    <property type="match status" value="1"/>
</dbReference>
<dbReference type="InterPro" id="IPR001412">
    <property type="entry name" value="aa-tRNA-synth_I_CS"/>
</dbReference>
<dbReference type="InterPro" id="IPR002300">
    <property type="entry name" value="aa-tRNA-synth_Ia"/>
</dbReference>
<dbReference type="InterPro" id="IPR033705">
    <property type="entry name" value="Anticodon_Ia_Val"/>
</dbReference>
<dbReference type="InterPro" id="IPR013155">
    <property type="entry name" value="M/V/L/I-tRNA-synth_anticd-bd"/>
</dbReference>
<dbReference type="InterPro" id="IPR014729">
    <property type="entry name" value="Rossmann-like_a/b/a_fold"/>
</dbReference>
<dbReference type="InterPro" id="IPR009080">
    <property type="entry name" value="tRNAsynth_Ia_anticodon-bd"/>
</dbReference>
<dbReference type="InterPro" id="IPR009008">
    <property type="entry name" value="Val/Leu/Ile-tRNA-synth_edit"/>
</dbReference>
<dbReference type="InterPro" id="IPR022874">
    <property type="entry name" value="Valine-tRNA_ligase_type_2"/>
</dbReference>
<dbReference type="InterPro" id="IPR002303">
    <property type="entry name" value="Valyl-tRNA_ligase"/>
</dbReference>
<dbReference type="InterPro" id="IPR048044">
    <property type="entry name" value="Valyl-tRNA_ligase_actino"/>
</dbReference>
<dbReference type="NCBIfam" id="NF000540">
    <property type="entry name" value="alt_ValS"/>
    <property type="match status" value="1"/>
</dbReference>
<dbReference type="NCBIfam" id="NF009687">
    <property type="entry name" value="PRK13208.1"/>
    <property type="match status" value="1"/>
</dbReference>
<dbReference type="PANTHER" id="PTHR11946:SF93">
    <property type="entry name" value="VALINE--TRNA LIGASE, CHLOROPLASTIC_MITOCHONDRIAL 2"/>
    <property type="match status" value="1"/>
</dbReference>
<dbReference type="PANTHER" id="PTHR11946">
    <property type="entry name" value="VALYL-TRNA SYNTHETASES"/>
    <property type="match status" value="1"/>
</dbReference>
<dbReference type="Pfam" id="PF08264">
    <property type="entry name" value="Anticodon_1"/>
    <property type="match status" value="1"/>
</dbReference>
<dbReference type="Pfam" id="PF00133">
    <property type="entry name" value="tRNA-synt_1"/>
    <property type="match status" value="2"/>
</dbReference>
<dbReference type="PRINTS" id="PR00986">
    <property type="entry name" value="TRNASYNTHVAL"/>
</dbReference>
<dbReference type="SUPFAM" id="SSF47323">
    <property type="entry name" value="Anticodon-binding domain of a subclass of class I aminoacyl-tRNA synthetases"/>
    <property type="match status" value="1"/>
</dbReference>
<dbReference type="SUPFAM" id="SSF52374">
    <property type="entry name" value="Nucleotidylyl transferase"/>
    <property type="match status" value="1"/>
</dbReference>
<dbReference type="SUPFAM" id="SSF50677">
    <property type="entry name" value="ValRS/IleRS/LeuRS editing domain"/>
    <property type="match status" value="1"/>
</dbReference>
<dbReference type="PROSITE" id="PS00178">
    <property type="entry name" value="AA_TRNA_LIGASE_I"/>
    <property type="match status" value="1"/>
</dbReference>
<accession>Q6AFZ2</accession>
<proteinExistence type="inferred from homology"/>
<comment type="function">
    <text evidence="1">Catalyzes the attachment of valine to tRNA(Val). As ValRS can inadvertently accommodate and process structurally similar amino acids such as threonine, to avoid such errors, it has a 'posttransfer' editing activity that hydrolyzes mischarged Thr-tRNA(Val) in a tRNA-dependent manner.</text>
</comment>
<comment type="catalytic activity">
    <reaction evidence="1">
        <text>tRNA(Val) + L-valine + ATP = L-valyl-tRNA(Val) + AMP + diphosphate</text>
        <dbReference type="Rhea" id="RHEA:10704"/>
        <dbReference type="Rhea" id="RHEA-COMP:9672"/>
        <dbReference type="Rhea" id="RHEA-COMP:9708"/>
        <dbReference type="ChEBI" id="CHEBI:30616"/>
        <dbReference type="ChEBI" id="CHEBI:33019"/>
        <dbReference type="ChEBI" id="CHEBI:57762"/>
        <dbReference type="ChEBI" id="CHEBI:78442"/>
        <dbReference type="ChEBI" id="CHEBI:78537"/>
        <dbReference type="ChEBI" id="CHEBI:456215"/>
        <dbReference type="EC" id="6.1.1.9"/>
    </reaction>
</comment>
<comment type="subunit">
    <text evidence="1">Monomer.</text>
</comment>
<comment type="subcellular location">
    <subcellularLocation>
        <location evidence="1">Cytoplasm</location>
    </subcellularLocation>
</comment>
<comment type="domain">
    <text evidence="1">ValRS has two distinct active sites: one for aminoacylation and one for editing. The misactivated threonine is translocated from the active site to the editing site.</text>
</comment>
<comment type="similarity">
    <text evidence="1">Belongs to the class-I aminoacyl-tRNA synthetase family. ValS type 2 subfamily.</text>
</comment>
<gene>
    <name evidence="1" type="primary">valS</name>
    <name type="ordered locus">Lxx07930</name>
</gene>
<reference key="1">
    <citation type="journal article" date="2004" name="Mol. Plant Microbe Interact.">
        <title>The genome sequence of the Gram-positive sugarcane pathogen Leifsonia xyli subsp. xyli.</title>
        <authorList>
            <person name="Monteiro-Vitorello C.B."/>
            <person name="Camargo L.E.A."/>
            <person name="Van Sluys M.A."/>
            <person name="Kitajima J.P."/>
            <person name="Truffi D."/>
            <person name="do Amaral A.M."/>
            <person name="Harakava R."/>
            <person name="de Oliveira J.C.F."/>
            <person name="Wood D."/>
            <person name="de Oliveira M.C."/>
            <person name="Miyaki C.Y."/>
            <person name="Takita M.A."/>
            <person name="da Silva A.C.R."/>
            <person name="Furlan L.R."/>
            <person name="Carraro D.M."/>
            <person name="Camarotte G."/>
            <person name="Almeida N.F. Jr."/>
            <person name="Carrer H."/>
            <person name="Coutinho L.L."/>
            <person name="El-Dorry H.A."/>
            <person name="Ferro M.I.T."/>
            <person name="Gagliardi P.R."/>
            <person name="Giglioti E."/>
            <person name="Goldman M.H.S."/>
            <person name="Goldman G.H."/>
            <person name="Kimura E.T."/>
            <person name="Ferro E.S."/>
            <person name="Kuramae E.E."/>
            <person name="Lemos E.G.M."/>
            <person name="Lemos M.V.F."/>
            <person name="Mauro S.M.Z."/>
            <person name="Machado M.A."/>
            <person name="Marino C.L."/>
            <person name="Menck C.F."/>
            <person name="Nunes L.R."/>
            <person name="Oliveira R.C."/>
            <person name="Pereira G.G."/>
            <person name="Siqueira W."/>
            <person name="de Souza A.A."/>
            <person name="Tsai S.M."/>
            <person name="Zanca A.S."/>
            <person name="Simpson A.J.G."/>
            <person name="Brumbley S.M."/>
            <person name="Setubal J.C."/>
        </authorList>
    </citation>
    <scope>NUCLEOTIDE SEQUENCE [LARGE SCALE GENOMIC DNA]</scope>
    <source>
        <strain>CTCB07</strain>
    </source>
</reference>
<keyword id="KW-0030">Aminoacyl-tRNA synthetase</keyword>
<keyword id="KW-0067">ATP-binding</keyword>
<keyword id="KW-0963">Cytoplasm</keyword>
<keyword id="KW-0436">Ligase</keyword>
<keyword id="KW-0547">Nucleotide-binding</keyword>
<keyword id="KW-0648">Protein biosynthesis</keyword>
<keyword id="KW-1185">Reference proteome</keyword>
<organism>
    <name type="scientific">Leifsonia xyli subsp. xyli (strain CTCB07)</name>
    <dbReference type="NCBI Taxonomy" id="281090"/>
    <lineage>
        <taxon>Bacteria</taxon>
        <taxon>Bacillati</taxon>
        <taxon>Actinomycetota</taxon>
        <taxon>Actinomycetes</taxon>
        <taxon>Micrococcales</taxon>
        <taxon>Microbacteriaceae</taxon>
        <taxon>Leifsonia</taxon>
    </lineage>
</organism>